<accession>P05566</accession>
<protein>
    <recommendedName>
        <fullName>Ovomucoid</fullName>
    </recommendedName>
</protein>
<feature type="chain" id="PRO_0000073150" description="Ovomucoid">
    <location>
        <begin position="1" status="less than"/>
        <end position="54" status="greater than"/>
    </location>
</feature>
<feature type="domain" description="Kazal-like" evidence="1">
    <location>
        <begin position="4"/>
        <end position="54"/>
    </location>
</feature>
<feature type="site" description="Reactive bond 3">
    <location>
        <begin position="16"/>
        <end position="17"/>
    </location>
</feature>
<feature type="glycosylation site" description="N-linked (GlcNAc...) asparagine">
    <location>
        <position position="43"/>
    </location>
</feature>
<feature type="disulfide bond">
    <location>
        <begin position="6"/>
        <end position="36"/>
    </location>
</feature>
<feature type="disulfide bond">
    <location>
        <begin position="14"/>
        <end position="33"/>
    </location>
</feature>
<feature type="disulfide bond">
    <location>
        <begin position="22"/>
        <end position="54"/>
    </location>
</feature>
<feature type="non-terminal residue">
    <location>
        <position position="1"/>
    </location>
</feature>
<feature type="non-terminal residue">
    <location>
        <position position="54"/>
    </location>
</feature>
<sequence>IVTVDCSDYPKPVCSPENMPVCGSDSKTYSNKCDFCNAVADSNGTLTLSHFGKC</sequence>
<name>IOVO_NYCNY</name>
<dbReference type="PIR" id="F31436">
    <property type="entry name" value="F31436"/>
</dbReference>
<dbReference type="SMR" id="P05566"/>
<dbReference type="GO" id="GO:0005576">
    <property type="term" value="C:extracellular region"/>
    <property type="evidence" value="ECO:0007669"/>
    <property type="project" value="UniProtKB-SubCell"/>
</dbReference>
<dbReference type="GO" id="GO:0004867">
    <property type="term" value="F:serine-type endopeptidase inhibitor activity"/>
    <property type="evidence" value="ECO:0007669"/>
    <property type="project" value="UniProtKB-KW"/>
</dbReference>
<dbReference type="CDD" id="cd00104">
    <property type="entry name" value="KAZAL_FS"/>
    <property type="match status" value="1"/>
</dbReference>
<dbReference type="FunFam" id="3.30.60.30:FF:000037">
    <property type="entry name" value="Ovomucoid"/>
    <property type="match status" value="1"/>
</dbReference>
<dbReference type="Gene3D" id="3.30.60.30">
    <property type="match status" value="1"/>
</dbReference>
<dbReference type="InterPro" id="IPR051597">
    <property type="entry name" value="Bifunctional_prot_inhibitor"/>
</dbReference>
<dbReference type="InterPro" id="IPR002350">
    <property type="entry name" value="Kazal_dom"/>
</dbReference>
<dbReference type="InterPro" id="IPR036058">
    <property type="entry name" value="Kazal_dom_sf"/>
</dbReference>
<dbReference type="PANTHER" id="PTHR47729:SF1">
    <property type="entry name" value="OVOMUCOID-LIKE-RELATED"/>
    <property type="match status" value="1"/>
</dbReference>
<dbReference type="PANTHER" id="PTHR47729">
    <property type="entry name" value="SERINE PEPTIDASE INHIBITOR, KAZAL TYPE 2, TANDEM DUPLICATE 1-RELATED"/>
    <property type="match status" value="1"/>
</dbReference>
<dbReference type="Pfam" id="PF00050">
    <property type="entry name" value="Kazal_1"/>
    <property type="match status" value="1"/>
</dbReference>
<dbReference type="SMART" id="SM00280">
    <property type="entry name" value="KAZAL"/>
    <property type="match status" value="1"/>
</dbReference>
<dbReference type="SUPFAM" id="SSF100895">
    <property type="entry name" value="Kazal-type serine protease inhibitors"/>
    <property type="match status" value="1"/>
</dbReference>
<dbReference type="PROSITE" id="PS00282">
    <property type="entry name" value="KAZAL_1"/>
    <property type="match status" value="1"/>
</dbReference>
<dbReference type="PROSITE" id="PS51465">
    <property type="entry name" value="KAZAL_2"/>
    <property type="match status" value="1"/>
</dbReference>
<comment type="subcellular location">
    <subcellularLocation>
        <location>Secreted</location>
    </subcellularLocation>
</comment>
<comment type="domain">
    <text>Avian ovomucoid consists of three homologous, tandem Kazal family inhibitory domains.</text>
</comment>
<organism>
    <name type="scientific">Nycticorax nycticorax</name>
    <name type="common">Black-crowned night-heron</name>
    <name type="synonym">Ardea nycticorax</name>
    <dbReference type="NCBI Taxonomy" id="8901"/>
    <lineage>
        <taxon>Eukaryota</taxon>
        <taxon>Metazoa</taxon>
        <taxon>Chordata</taxon>
        <taxon>Craniata</taxon>
        <taxon>Vertebrata</taxon>
        <taxon>Euteleostomi</taxon>
        <taxon>Archelosauria</taxon>
        <taxon>Archosauria</taxon>
        <taxon>Dinosauria</taxon>
        <taxon>Saurischia</taxon>
        <taxon>Theropoda</taxon>
        <taxon>Coelurosauria</taxon>
        <taxon>Aves</taxon>
        <taxon>Neognathae</taxon>
        <taxon>Neoaves</taxon>
        <taxon>Aequornithes</taxon>
        <taxon>Pelecaniformes</taxon>
        <taxon>Ardeidae</taxon>
        <taxon>Nycticorax</taxon>
    </lineage>
</organism>
<reference key="1">
    <citation type="journal article" date="1987" name="Biochemistry">
        <title>Ovomucoid third domains from 100 avian species: isolation, sequences, and hypervariability of enzyme-inhibitor contact residues.</title>
        <authorList>
            <person name="Laskowski M. Jr."/>
            <person name="Kato I."/>
            <person name="Ardelt W."/>
            <person name="Cook J."/>
            <person name="Denton A."/>
            <person name="Empie M.W."/>
            <person name="Kohr W.J."/>
            <person name="Park S.J."/>
            <person name="Parks K."/>
            <person name="Schatzley B.L."/>
            <person name="Schoenberger O.L."/>
            <person name="Tashiro M."/>
            <person name="Vichot G."/>
            <person name="Whatley H.E."/>
            <person name="Wieczorek A."/>
            <person name="Wieczorek M."/>
        </authorList>
    </citation>
    <scope>PROTEIN SEQUENCE</scope>
</reference>
<evidence type="ECO:0000255" key="1">
    <source>
        <dbReference type="PROSITE-ProRule" id="PRU00798"/>
    </source>
</evidence>
<keyword id="KW-0903">Direct protein sequencing</keyword>
<keyword id="KW-1015">Disulfide bond</keyword>
<keyword id="KW-0325">Glycoprotein</keyword>
<keyword id="KW-0646">Protease inhibitor</keyword>
<keyword id="KW-0677">Repeat</keyword>
<keyword id="KW-0964">Secreted</keyword>
<keyword id="KW-0722">Serine protease inhibitor</keyword>
<proteinExistence type="evidence at protein level"/>